<proteinExistence type="inferred from homology"/>
<evidence type="ECO:0000250" key="1"/>
<evidence type="ECO:0000255" key="2"/>
<evidence type="ECO:0000305" key="3"/>
<feature type="signal peptide" evidence="2">
    <location>
        <begin position="1"/>
        <end position="21"/>
    </location>
</feature>
<feature type="chain" id="PRO_0000299238" description="Glycoprotein">
    <location>
        <begin position="22"/>
        <end position="591"/>
    </location>
</feature>
<feature type="topological domain" description="Virion surface" evidence="2">
    <location>
        <begin position="22"/>
        <end position="552"/>
    </location>
</feature>
<feature type="transmembrane region" description="Helical" evidence="2">
    <location>
        <begin position="553"/>
        <end position="573"/>
    </location>
</feature>
<feature type="topological domain" description="Intravirion" evidence="2">
    <location>
        <begin position="574"/>
        <end position="591"/>
    </location>
</feature>
<protein>
    <recommendedName>
        <fullName>Glycoprotein</fullName>
    </recommendedName>
</protein>
<gene>
    <name type="primary">G</name>
</gene>
<reference key="1">
    <citation type="journal article" date="2005" name="J. Virol. Methods">
        <title>Shotgun sequencing of the negative-sense RNA genome of the rhabdovirus Maize mosaic virus.</title>
        <authorList>
            <person name="Reed S.E."/>
            <person name="Tsai C.W."/>
            <person name="Willie K.J."/>
            <person name="Redinbaugh M.G."/>
            <person name="Hogenhout S.A."/>
        </authorList>
    </citation>
    <scope>NUCLEOTIDE SEQUENCE [GENOMIC RNA]</scope>
</reference>
<name>GLYCO_MMVR</name>
<organismHost>
    <name type="scientific">Rottboellia</name>
    <dbReference type="NCBI Taxonomy" id="300124"/>
</organismHost>
<organismHost>
    <name type="scientific">Setaria</name>
    <dbReference type="NCBI Taxonomy" id="4554"/>
</organismHost>
<organismHost>
    <name type="scientific">Sorghum bicolor</name>
    <name type="common">Sorghum</name>
    <name type="synonym">Sorghum vulgare</name>
    <dbReference type="NCBI Taxonomy" id="4558"/>
</organismHost>
<organismHost>
    <name type="scientific">Zea mays</name>
    <name type="common">Maize</name>
    <dbReference type="NCBI Taxonomy" id="4577"/>
</organismHost>
<accession>Q6E0W7</accession>
<dbReference type="EMBL" id="AY618418">
    <property type="protein sequence ID" value="AAT66756.1"/>
    <property type="molecule type" value="Genomic_RNA"/>
</dbReference>
<dbReference type="RefSeq" id="YP_052854.1">
    <property type="nucleotide sequence ID" value="NC_005975.1"/>
</dbReference>
<dbReference type="SMR" id="Q6E0W7"/>
<dbReference type="GeneID" id="2886116"/>
<dbReference type="KEGG" id="vg:2886116"/>
<dbReference type="Proteomes" id="UP000008593">
    <property type="component" value="Segment"/>
</dbReference>
<dbReference type="GO" id="GO:0016020">
    <property type="term" value="C:membrane"/>
    <property type="evidence" value="ECO:0007669"/>
    <property type="project" value="UniProtKB-KW"/>
</dbReference>
<dbReference type="GO" id="GO:0019031">
    <property type="term" value="C:viral envelope"/>
    <property type="evidence" value="ECO:0007669"/>
    <property type="project" value="UniProtKB-KW"/>
</dbReference>
<dbReference type="GO" id="GO:0055036">
    <property type="term" value="C:virion membrane"/>
    <property type="evidence" value="ECO:0007669"/>
    <property type="project" value="UniProtKB-SubCell"/>
</dbReference>
<dbReference type="GO" id="GO:0046718">
    <property type="term" value="P:symbiont entry into host cell"/>
    <property type="evidence" value="ECO:0007669"/>
    <property type="project" value="UniProtKB-KW"/>
</dbReference>
<dbReference type="GO" id="GO:0019062">
    <property type="term" value="P:virion attachment to host cell"/>
    <property type="evidence" value="ECO:0007669"/>
    <property type="project" value="UniProtKB-KW"/>
</dbReference>
<sequence length="591" mass="65917">MSLIHLIYFPTILSLILGTEGTPALTYGNLADNQHGNEEQGDVDMYPLYECSKKGAGVSSNNWYGACRGACSMTKNTTDVHMEIYYRNDSVGWIDVLSIQTTEIWKHSHVTWYGECEHNTKYGSSNTAPVSVILERLEFLHNGMSSWPYGHSIHVHDTISSPDCSYFDDVSRSGWRLIISKRALELKSDIAGEGYIVDPDVGYVYPVADGIGKGRTWHVWKASSVPSSGCYFKSAGITNCTLLMDTFLYSCPSLNIAFSARVGKHIKSTCVGDMNISTDGVTYQTLGSTDQGSISTQLVSLWHQSQEALIQQLILTINEALGKIETSYCESTCDLTEMLISQHTEHPMVIETPVGPWLPYSIDGKVSVLPCQGGQDLVVIKPIEICASPFMLKVKSLKSLDTYWWVPTDSHVAPFTQCSNRDDEEMIIKIQRKKPLIFEFWRGAYKLDYPYNSSGIWLDNPGGHIHRSSKWFPTLDSLSYSSPINLPLISKGIRKHIQAIVSTTEITSGGNVTSWTHSISTIAEAMFDSAAIAAGRVVMWWYTLEESVKRYLTVAFGLVLTVITIWAMSKLFFRSSPTYARAPTNIEWVRS</sequence>
<comment type="function">
    <text evidence="1">Attaches the virus to host cellular receptor, inducing endocytosis of the virion. In the endosome, the acidic pH induces conformational changes in the glycoprotein trimer, which trigger fusion between virus and cell membrane (By similarity).</text>
</comment>
<comment type="subunit">
    <text evidence="1">Homotrimer. Interacts with matrix protein (By similarity).</text>
</comment>
<comment type="subcellular location">
    <subcellularLocation>
        <location evidence="1">Virion membrane</location>
        <topology evidence="1">Single-pass type I membrane protein</topology>
    </subcellularLocation>
</comment>
<comment type="PTM">
    <text evidence="1">Glycosylatedby host. Glycosylation is crucial for glycoprotein export at the cell surface (By similarity).</text>
</comment>
<comment type="similarity">
    <text evidence="3">Belongs to the nucleorhabdovirus glycoprotein family.</text>
</comment>
<keyword id="KW-0325">Glycoprotein</keyword>
<keyword id="KW-0945">Host-virus interaction</keyword>
<keyword id="KW-0472">Membrane</keyword>
<keyword id="KW-1185">Reference proteome</keyword>
<keyword id="KW-0732">Signal</keyword>
<keyword id="KW-0812">Transmembrane</keyword>
<keyword id="KW-1133">Transmembrane helix</keyword>
<keyword id="KW-1161">Viral attachment to host cell</keyword>
<keyword id="KW-0261">Viral envelope protein</keyword>
<keyword id="KW-0946">Virion</keyword>
<keyword id="KW-1160">Virus entry into host cell</keyword>
<organism>
    <name type="scientific">Maize mosaic virus (isolate Maize/United States/Reed/2005)</name>
    <name type="common">MMV</name>
    <dbReference type="NCBI Taxonomy" id="928305"/>
    <lineage>
        <taxon>Viruses</taxon>
        <taxon>Riboviria</taxon>
        <taxon>Orthornavirae</taxon>
        <taxon>Negarnaviricota</taxon>
        <taxon>Haploviricotina</taxon>
        <taxon>Monjiviricetes</taxon>
        <taxon>Mononegavirales</taxon>
        <taxon>Rhabdoviridae</taxon>
        <taxon>Betarhabdovirinae</taxon>
        <taxon>Alphanucleorhabdovirus</taxon>
        <taxon>Alphanucleorhabdovirus maydis</taxon>
    </lineage>
</organism>